<gene>
    <name type="primary">TRX3</name>
    <name type="ordered locus">YCR083W</name>
    <name type="ORF">YCR83W</name>
</gene>
<organism>
    <name type="scientific">Saccharomyces cerevisiae (strain ATCC 204508 / S288c)</name>
    <name type="common">Baker's yeast</name>
    <dbReference type="NCBI Taxonomy" id="559292"/>
    <lineage>
        <taxon>Eukaryota</taxon>
        <taxon>Fungi</taxon>
        <taxon>Dikarya</taxon>
        <taxon>Ascomycota</taxon>
        <taxon>Saccharomycotina</taxon>
        <taxon>Saccharomycetes</taxon>
        <taxon>Saccharomycetales</taxon>
        <taxon>Saccharomycetaceae</taxon>
        <taxon>Saccharomyces</taxon>
    </lineage>
</organism>
<reference key="1">
    <citation type="journal article" date="1992" name="Nature">
        <title>The complete DNA sequence of yeast chromosome III.</title>
        <authorList>
            <person name="Oliver S.G."/>
            <person name="van der Aart Q.J.M."/>
            <person name="Agostoni-Carbone M.L."/>
            <person name="Aigle M."/>
            <person name="Alberghina L."/>
            <person name="Alexandraki D."/>
            <person name="Antoine G."/>
            <person name="Anwar R."/>
            <person name="Ballesta J.P.G."/>
            <person name="Benit P."/>
            <person name="Berben G."/>
            <person name="Bergantino E."/>
            <person name="Biteau N."/>
            <person name="Bolle P.-A."/>
            <person name="Bolotin-Fukuhara M."/>
            <person name="Brown A."/>
            <person name="Brown A.J.P."/>
            <person name="Buhler J.-M."/>
            <person name="Carcano C."/>
            <person name="Carignani G."/>
            <person name="Cederberg H."/>
            <person name="Chanet R."/>
            <person name="Contreras R."/>
            <person name="Crouzet M."/>
            <person name="Daignan-Fornier B."/>
            <person name="Defoor E."/>
            <person name="Delgado M.D."/>
            <person name="Demolder J."/>
            <person name="Doira C."/>
            <person name="Dubois E."/>
            <person name="Dujon B."/>
            <person name="Duesterhoeft A."/>
            <person name="Erdmann D."/>
            <person name="Esteban M."/>
            <person name="Fabre F."/>
            <person name="Fairhead C."/>
            <person name="Faye G."/>
            <person name="Feldmann H."/>
            <person name="Fiers W."/>
            <person name="Francingues-Gaillard M.-C."/>
            <person name="Franco L."/>
            <person name="Frontali L."/>
            <person name="Fukuhara H."/>
            <person name="Fuller L.J."/>
            <person name="Galland P."/>
            <person name="Gent M.E."/>
            <person name="Gigot D."/>
            <person name="Gilliquet V."/>
            <person name="Glansdorff N."/>
            <person name="Goffeau A."/>
            <person name="Grenson M."/>
            <person name="Grisanti P."/>
            <person name="Grivell L.A."/>
            <person name="de Haan M."/>
            <person name="Haasemann M."/>
            <person name="Hatat D."/>
            <person name="Hoenicka J."/>
            <person name="Hegemann J.H."/>
            <person name="Herbert C.J."/>
            <person name="Hilger F."/>
            <person name="Hohmann S."/>
            <person name="Hollenberg C.P."/>
            <person name="Huse K."/>
            <person name="Iborra F."/>
            <person name="Indge K.J."/>
            <person name="Isono K."/>
            <person name="Jacq C."/>
            <person name="Jacquet M."/>
            <person name="James C.M."/>
            <person name="Jauniaux J.-C."/>
            <person name="Jia Y."/>
            <person name="Jimenez A."/>
            <person name="Kelly A."/>
            <person name="Kleinhans U."/>
            <person name="Kreisl P."/>
            <person name="Lanfranchi G."/>
            <person name="Lewis C."/>
            <person name="van der Linden C.G."/>
            <person name="Lucchini G."/>
            <person name="Lutzenkirchen K."/>
            <person name="Maat M.J."/>
            <person name="Mallet L."/>
            <person name="Mannhaupt G."/>
            <person name="Martegani E."/>
            <person name="Mathieu A."/>
            <person name="Maurer C.T.C."/>
            <person name="McConnell D."/>
            <person name="McKee R.A."/>
            <person name="Messenguy F."/>
            <person name="Mewes H.-W."/>
            <person name="Molemans F."/>
            <person name="Montague M.A."/>
            <person name="Muzi Falconi M."/>
            <person name="Navas L."/>
            <person name="Newlon C.S."/>
            <person name="Noone D."/>
            <person name="Pallier C."/>
            <person name="Panzeri L."/>
            <person name="Pearson B.M."/>
            <person name="Perea J."/>
            <person name="Philippsen P."/>
            <person name="Pierard A."/>
            <person name="Planta R.J."/>
            <person name="Plevani P."/>
            <person name="Poetsch B."/>
            <person name="Pohl F.M."/>
            <person name="Purnelle B."/>
            <person name="Ramezani Rad M."/>
            <person name="Rasmussen S.W."/>
            <person name="Raynal A."/>
            <person name="Remacha M.A."/>
            <person name="Richterich P."/>
            <person name="Roberts A.B."/>
            <person name="Rodriguez F."/>
            <person name="Sanz E."/>
            <person name="Schaaff-Gerstenschlaeger I."/>
            <person name="Scherens B."/>
            <person name="Schweitzer B."/>
            <person name="Shu Y."/>
            <person name="Skala J."/>
            <person name="Slonimski P.P."/>
            <person name="Sor F."/>
            <person name="Soustelle C."/>
            <person name="Spiegelberg R."/>
            <person name="Stateva L.I."/>
            <person name="Steensma H.Y."/>
            <person name="Steiner S."/>
            <person name="Thierry A."/>
            <person name="Thireos G."/>
            <person name="Tzermia M."/>
            <person name="Urrestarazu L.A."/>
            <person name="Valle G."/>
            <person name="Vetter I."/>
            <person name="van Vliet-Reedijk J.C."/>
            <person name="Voet M."/>
            <person name="Volckaert G."/>
            <person name="Vreken P."/>
            <person name="Wang H."/>
            <person name="Warmington J.R."/>
            <person name="von Wettstein D."/>
            <person name="Wicksteed B.L."/>
            <person name="Wilson C."/>
            <person name="Wurst H."/>
            <person name="Xu G."/>
            <person name="Yoshikawa A."/>
            <person name="Zimmermann F.K."/>
            <person name="Sgouros J.G."/>
        </authorList>
    </citation>
    <scope>NUCLEOTIDE SEQUENCE [LARGE SCALE GENOMIC DNA]</scope>
    <source>
        <strain>ATCC 204508 / S288c</strain>
    </source>
</reference>
<reference key="2">
    <citation type="journal article" date="2014" name="G3 (Bethesda)">
        <title>The reference genome sequence of Saccharomyces cerevisiae: Then and now.</title>
        <authorList>
            <person name="Engel S.R."/>
            <person name="Dietrich F.S."/>
            <person name="Fisk D.G."/>
            <person name="Binkley G."/>
            <person name="Balakrishnan R."/>
            <person name="Costanzo M.C."/>
            <person name="Dwight S.S."/>
            <person name="Hitz B.C."/>
            <person name="Karra K."/>
            <person name="Nash R.S."/>
            <person name="Weng S."/>
            <person name="Wong E.D."/>
            <person name="Lloyd P."/>
            <person name="Skrzypek M.S."/>
            <person name="Miyasato S.R."/>
            <person name="Simison M."/>
            <person name="Cherry J.M."/>
        </authorList>
    </citation>
    <scope>GENOME REANNOTATION</scope>
    <source>
        <strain>ATCC 204508 / S288c</strain>
    </source>
</reference>
<reference key="3">
    <citation type="journal article" date="1999" name="J. Biol. Chem.">
        <title>Identification and functional characterization of a novel mitochondrial thioredoxin system in Saccharomyces cerevisiae.</title>
        <authorList>
            <person name="Pedrajas J.R."/>
            <person name="Kosmidou E."/>
            <person name="Miranda-Vizuete A."/>
            <person name="Gustafsson J.-A."/>
            <person name="Wright A.P.H."/>
            <person name="Spyrou G."/>
        </authorList>
    </citation>
    <scope>CHARACTERIZATION</scope>
</reference>
<reference key="4">
    <citation type="journal article" date="2003" name="Nature">
        <title>Global analysis of protein expression in yeast.</title>
        <authorList>
            <person name="Ghaemmaghami S."/>
            <person name="Huh W.-K."/>
            <person name="Bower K."/>
            <person name="Howson R.W."/>
            <person name="Belle A."/>
            <person name="Dephoure N."/>
            <person name="O'Shea E.K."/>
            <person name="Weissman J.S."/>
        </authorList>
    </citation>
    <scope>LEVEL OF PROTEIN EXPRESSION [LARGE SCALE ANALYSIS]</scope>
</reference>
<sequence>MLFYKPVMRMAVRPLKSIRFQSSYTSITKLTNLTEFRNLIKQNDKLVIDFYATWCGPCKMMQPHLTKLIQAYPDVRFVKCDVDESPDIAKECEVTAMPTFVLGKDGQLIGKIIGANPTALEKGIKDL</sequence>
<dbReference type="EMBL" id="X59720">
    <property type="protein sequence ID" value="CAA42258.1"/>
    <property type="molecule type" value="Genomic_DNA"/>
</dbReference>
<dbReference type="EMBL" id="BK006937">
    <property type="protein sequence ID" value="DAA07553.1"/>
    <property type="molecule type" value="Genomic_DNA"/>
</dbReference>
<dbReference type="PIR" id="S19498">
    <property type="entry name" value="S19498"/>
</dbReference>
<dbReference type="RefSeq" id="NP_010006.1">
    <property type="nucleotide sequence ID" value="NM_001178789.1"/>
</dbReference>
<dbReference type="PDB" id="2OE0">
    <property type="method" value="X-ray"/>
    <property type="resolution" value="2.00 A"/>
    <property type="chains" value="A/B=22-127"/>
</dbReference>
<dbReference type="PDB" id="2OE1">
    <property type="method" value="X-ray"/>
    <property type="resolution" value="2.10 A"/>
    <property type="chains" value="A/B=22-127"/>
</dbReference>
<dbReference type="PDB" id="2OE3">
    <property type="method" value="X-ray"/>
    <property type="resolution" value="1.80 A"/>
    <property type="chains" value="A/B=22-127"/>
</dbReference>
<dbReference type="PDB" id="5YKW">
    <property type="method" value="X-ray"/>
    <property type="resolution" value="2.08 A"/>
    <property type="chains" value="A=22-127"/>
</dbReference>
<dbReference type="PDBsum" id="2OE0"/>
<dbReference type="PDBsum" id="2OE1"/>
<dbReference type="PDBsum" id="2OE3"/>
<dbReference type="PDBsum" id="5YKW"/>
<dbReference type="SMR" id="P25372"/>
<dbReference type="BioGRID" id="31056">
    <property type="interactions" value="87"/>
</dbReference>
<dbReference type="FunCoup" id="P25372">
    <property type="interactions" value="161"/>
</dbReference>
<dbReference type="IntAct" id="P25372">
    <property type="interactions" value="7"/>
</dbReference>
<dbReference type="STRING" id="4932.YCR083W"/>
<dbReference type="iPTMnet" id="P25372"/>
<dbReference type="PaxDb" id="4932-YCR083W"/>
<dbReference type="PeptideAtlas" id="P25372"/>
<dbReference type="EnsemblFungi" id="YCR083W_mRNA">
    <property type="protein sequence ID" value="YCR083W"/>
    <property type="gene ID" value="YCR083W"/>
</dbReference>
<dbReference type="GeneID" id="850444"/>
<dbReference type="KEGG" id="sce:YCR083W"/>
<dbReference type="AGR" id="SGD:S000000679"/>
<dbReference type="SGD" id="S000000679">
    <property type="gene designation" value="TRX3"/>
</dbReference>
<dbReference type="VEuPathDB" id="FungiDB:YCR083W"/>
<dbReference type="eggNOG" id="KOG0907">
    <property type="taxonomic scope" value="Eukaryota"/>
</dbReference>
<dbReference type="GeneTree" id="ENSGT00940000163988"/>
<dbReference type="HOGENOM" id="CLU_090389_14_5_1"/>
<dbReference type="InParanoid" id="P25372"/>
<dbReference type="OMA" id="DFHALWC"/>
<dbReference type="OrthoDB" id="10263751at2759"/>
<dbReference type="BioCyc" id="YEAST:G3O-29379-MONOMER"/>
<dbReference type="Reactome" id="R-SCE-2559580">
    <property type="pathway name" value="Oxidative Stress Induced Senescence"/>
</dbReference>
<dbReference type="Reactome" id="R-SCE-3299685">
    <property type="pathway name" value="Detoxification of Reactive Oxygen Species"/>
</dbReference>
<dbReference type="Reactome" id="R-SCE-499943">
    <property type="pathway name" value="Interconversion of nucleotide di- and triphosphates"/>
</dbReference>
<dbReference type="Reactome" id="R-SCE-5628897">
    <property type="pathway name" value="TP53 Regulates Metabolic Genes"/>
</dbReference>
<dbReference type="Reactome" id="R-SCE-844456">
    <property type="pathway name" value="The NLRP3 inflammasome"/>
</dbReference>
<dbReference type="BioGRID-ORCS" id="850444">
    <property type="hits" value="0 hits in 10 CRISPR screens"/>
</dbReference>
<dbReference type="ChiTaRS" id="TRX3">
    <property type="organism name" value="yeast"/>
</dbReference>
<dbReference type="EvolutionaryTrace" id="P25372"/>
<dbReference type="PRO" id="PR:P25372"/>
<dbReference type="Proteomes" id="UP000002311">
    <property type="component" value="Chromosome III"/>
</dbReference>
<dbReference type="RNAct" id="P25372">
    <property type="molecule type" value="protein"/>
</dbReference>
<dbReference type="GO" id="GO:0005739">
    <property type="term" value="C:mitochondrion"/>
    <property type="evidence" value="ECO:0000314"/>
    <property type="project" value="SGD"/>
</dbReference>
<dbReference type="GO" id="GO:0015036">
    <property type="term" value="F:disulfide oxidoreductase activity"/>
    <property type="evidence" value="ECO:0000314"/>
    <property type="project" value="SGD"/>
</dbReference>
<dbReference type="GO" id="GO:0034599">
    <property type="term" value="P:cellular response to oxidative stress"/>
    <property type="evidence" value="ECO:0000315"/>
    <property type="project" value="SGD"/>
</dbReference>
<dbReference type="CDD" id="cd02947">
    <property type="entry name" value="TRX_family"/>
    <property type="match status" value="1"/>
</dbReference>
<dbReference type="FunFam" id="3.40.30.10:FF:000248">
    <property type="entry name" value="Thioredoxin"/>
    <property type="match status" value="1"/>
</dbReference>
<dbReference type="Gene3D" id="3.40.30.10">
    <property type="entry name" value="Glutaredoxin"/>
    <property type="match status" value="1"/>
</dbReference>
<dbReference type="InterPro" id="IPR036249">
    <property type="entry name" value="Thioredoxin-like_sf"/>
</dbReference>
<dbReference type="InterPro" id="IPR017937">
    <property type="entry name" value="Thioredoxin_CS"/>
</dbReference>
<dbReference type="InterPro" id="IPR013766">
    <property type="entry name" value="Thioredoxin_domain"/>
</dbReference>
<dbReference type="InterPro" id="IPR050620">
    <property type="entry name" value="Thioredoxin_H-type-like"/>
</dbReference>
<dbReference type="PANTHER" id="PTHR10438">
    <property type="entry name" value="THIOREDOXIN"/>
    <property type="match status" value="1"/>
</dbReference>
<dbReference type="PANTHER" id="PTHR10438:SF468">
    <property type="entry name" value="THIOREDOXIN-1-RELATED"/>
    <property type="match status" value="1"/>
</dbReference>
<dbReference type="Pfam" id="PF00085">
    <property type="entry name" value="Thioredoxin"/>
    <property type="match status" value="1"/>
</dbReference>
<dbReference type="PRINTS" id="PR00421">
    <property type="entry name" value="THIOREDOXIN"/>
</dbReference>
<dbReference type="SUPFAM" id="SSF52833">
    <property type="entry name" value="Thioredoxin-like"/>
    <property type="match status" value="1"/>
</dbReference>
<dbReference type="PROSITE" id="PS00194">
    <property type="entry name" value="THIOREDOXIN_1"/>
    <property type="match status" value="1"/>
</dbReference>
<dbReference type="PROSITE" id="PS51352">
    <property type="entry name" value="THIOREDOXIN_2"/>
    <property type="match status" value="1"/>
</dbReference>
<keyword id="KW-0002">3D-structure</keyword>
<keyword id="KW-1015">Disulfide bond</keyword>
<keyword id="KW-0249">Electron transport</keyword>
<keyword id="KW-0496">Mitochondrion</keyword>
<keyword id="KW-0676">Redox-active center</keyword>
<keyword id="KW-1185">Reference proteome</keyword>
<keyword id="KW-0809">Transit peptide</keyword>
<keyword id="KW-0813">Transport</keyword>
<name>TRX3_YEAST</name>
<accession>P25372</accession>
<accession>D6VR84</accession>
<feature type="transit peptide" description="Mitochondrion" evidence="2">
    <location>
        <begin position="1"/>
        <end position="21"/>
    </location>
</feature>
<feature type="chain" id="PRO_0000034155" description="Thioredoxin-3, mitochondrial">
    <location>
        <begin position="22"/>
        <end position="127"/>
    </location>
</feature>
<feature type="domain" description="Thioredoxin" evidence="3">
    <location>
        <begin position="22"/>
        <end position="127"/>
    </location>
</feature>
<feature type="active site" description="Nucleophile" evidence="1">
    <location>
        <position position="55"/>
    </location>
</feature>
<feature type="active site" description="Nucleophile" evidence="1">
    <location>
        <position position="58"/>
    </location>
</feature>
<feature type="site" description="Deprotonates C-terminal active site Cys" evidence="1">
    <location>
        <position position="49"/>
    </location>
</feature>
<feature type="site" description="Contributes to redox potential value" evidence="1">
    <location>
        <position position="56"/>
    </location>
</feature>
<feature type="site" description="Contributes to redox potential value" evidence="1">
    <location>
        <position position="57"/>
    </location>
</feature>
<feature type="disulfide bond" description="Redox-active" evidence="3">
    <location>
        <begin position="55"/>
        <end position="58"/>
    </location>
</feature>
<feature type="helix" evidence="6">
    <location>
        <begin position="24"/>
        <end position="26"/>
    </location>
</feature>
<feature type="helix" evidence="6">
    <location>
        <begin position="33"/>
        <end position="42"/>
    </location>
</feature>
<feature type="strand" evidence="6">
    <location>
        <begin position="44"/>
        <end position="51"/>
    </location>
</feature>
<feature type="helix" evidence="6">
    <location>
        <begin position="56"/>
        <end position="60"/>
    </location>
</feature>
<feature type="helix" evidence="6">
    <location>
        <begin position="62"/>
        <end position="71"/>
    </location>
</feature>
<feature type="strand" evidence="6">
    <location>
        <begin position="75"/>
        <end position="81"/>
    </location>
</feature>
<feature type="turn" evidence="6">
    <location>
        <begin position="82"/>
        <end position="84"/>
    </location>
</feature>
<feature type="helix" evidence="6">
    <location>
        <begin position="86"/>
        <end position="91"/>
    </location>
</feature>
<feature type="strand" evidence="6">
    <location>
        <begin position="96"/>
        <end position="104"/>
    </location>
</feature>
<feature type="strand" evidence="6">
    <location>
        <begin position="107"/>
        <end position="115"/>
    </location>
</feature>
<feature type="helix" evidence="6">
    <location>
        <begin position="117"/>
        <end position="125"/>
    </location>
</feature>
<evidence type="ECO:0000250" key="1"/>
<evidence type="ECO:0000255" key="2"/>
<evidence type="ECO:0000255" key="3">
    <source>
        <dbReference type="PROSITE-ProRule" id="PRU00691"/>
    </source>
</evidence>
<evidence type="ECO:0000269" key="4">
    <source>
    </source>
</evidence>
<evidence type="ECO:0000305" key="5"/>
<evidence type="ECO:0007829" key="6">
    <source>
        <dbReference type="PDB" id="2OE3"/>
    </source>
</evidence>
<comment type="subcellular location">
    <subcellularLocation>
        <location>Mitochondrion</location>
    </subcellularLocation>
</comment>
<comment type="miscellaneous">
    <text>Yeast has two cytoplasmic thioredoxins, TRX1 and TRX2, and one mitochondrial, TRX3.</text>
</comment>
<comment type="miscellaneous">
    <text evidence="4">Present with 1010 molecules/cell in log phase SD medium.</text>
</comment>
<comment type="similarity">
    <text evidence="5">Belongs to the thioredoxin family.</text>
</comment>
<proteinExistence type="evidence at protein level"/>
<protein>
    <recommendedName>
        <fullName>Thioredoxin-3, mitochondrial</fullName>
    </recommendedName>
</protein>